<protein>
    <recommendedName>
        <fullName>Rab-like protein 3</fullName>
    </recommendedName>
</protein>
<sequence length="235" mass="26139">MASLDRVKVLVLGDSGVGKSSLVHLLCQNQVLGNPSWTVGCSVDVRLHEYREGTPEEKTYYIELWDVGGSVGSASSVKSTRAVFYNAVNGIILVHDLTNKKSSQNLYRWSLEALNRDLQPTGVLVTNGDYDREQFADNQIPLLVIGTKLDQIPEAKRSEVLTRTAFLAEDFNAEEINLDCTNTRCLAAGSSNAVKLSRFFDKVIEKRYSREGNLIPGFSDRKRFAGGNFKSLHYD</sequence>
<proteinExistence type="evidence at transcript level"/>
<feature type="chain" id="PRO_0000312171" description="Rab-like protein 3">
    <location>
        <begin position="1"/>
        <end position="235"/>
    </location>
</feature>
<feature type="region of interest" description="Small GTPase-like">
    <location>
        <begin position="1"/>
        <end position="235"/>
    </location>
</feature>
<feature type="binding site" evidence="2">
    <location>
        <begin position="16"/>
        <end position="21"/>
    </location>
    <ligand>
        <name>GTP</name>
        <dbReference type="ChEBI" id="CHEBI:37565"/>
    </ligand>
</feature>
<feature type="binding site" evidence="2">
    <location>
        <begin position="148"/>
        <end position="150"/>
    </location>
    <ligand>
        <name>GTP</name>
        <dbReference type="ChEBI" id="CHEBI:37565"/>
    </ligand>
</feature>
<feature type="binding site" evidence="2">
    <location>
        <begin position="179"/>
        <end position="180"/>
    </location>
    <ligand>
        <name>GTP</name>
        <dbReference type="ChEBI" id="CHEBI:37565"/>
    </ligand>
</feature>
<organism>
    <name type="scientific">Xenopus tropicalis</name>
    <name type="common">Western clawed frog</name>
    <name type="synonym">Silurana tropicalis</name>
    <dbReference type="NCBI Taxonomy" id="8364"/>
    <lineage>
        <taxon>Eukaryota</taxon>
        <taxon>Metazoa</taxon>
        <taxon>Chordata</taxon>
        <taxon>Craniata</taxon>
        <taxon>Vertebrata</taxon>
        <taxon>Euteleostomi</taxon>
        <taxon>Amphibia</taxon>
        <taxon>Batrachia</taxon>
        <taxon>Anura</taxon>
        <taxon>Pipoidea</taxon>
        <taxon>Pipidae</taxon>
        <taxon>Xenopodinae</taxon>
        <taxon>Xenopus</taxon>
        <taxon>Silurana</taxon>
    </lineage>
</organism>
<reference key="1">
    <citation type="submission" date="2007-03" db="EMBL/GenBank/DDBJ databases">
        <authorList>
            <consortium name="NIH - Xenopus Gene Collection (XGC) project"/>
        </authorList>
    </citation>
    <scope>NUCLEOTIDE SEQUENCE [LARGE SCALE MRNA]</scope>
    <source>
        <tissue>Embryo</tissue>
    </source>
</reference>
<comment type="function">
    <text evidence="1 2">Required for KRAS signaling regulation and modulation of cell proliferation (By similarity). Regulator of KRAS prenylation, and probably prenylation of other small GTPases (By similarity). Required for lymphocyte development and function (By similarity). Not required for myeloid cell development (By similarity).</text>
</comment>
<comment type="subunit">
    <text evidence="2">Homodimer.</text>
</comment>
<comment type="similarity">
    <text evidence="3">Belongs to the small GTPase superfamily. Rab family.</text>
</comment>
<gene>
    <name type="primary">rabl3</name>
</gene>
<keyword id="KW-0342">GTP-binding</keyword>
<keyword id="KW-0547">Nucleotide-binding</keyword>
<keyword id="KW-1185">Reference proteome</keyword>
<name>RABL3_XENTR</name>
<accession>A4IHM6</accession>
<evidence type="ECO:0000250" key="1">
    <source>
        <dbReference type="UniProtKB" id="Q5HYI8"/>
    </source>
</evidence>
<evidence type="ECO:0000250" key="2">
    <source>
        <dbReference type="UniProtKB" id="Q9D4V7"/>
    </source>
</evidence>
<evidence type="ECO:0000305" key="3"/>
<dbReference type="EMBL" id="BC135594">
    <property type="protein sequence ID" value="AAI35595.1"/>
    <property type="molecule type" value="mRNA"/>
</dbReference>
<dbReference type="RefSeq" id="NP_001096295.1">
    <property type="nucleotide sequence ID" value="NM_001102825.1"/>
</dbReference>
<dbReference type="SMR" id="A4IHM6"/>
<dbReference type="FunCoup" id="A4IHM6">
    <property type="interactions" value="2073"/>
</dbReference>
<dbReference type="STRING" id="8364.ENSXETP00000020843"/>
<dbReference type="PaxDb" id="8364-ENSXETP00000021859"/>
<dbReference type="DNASU" id="100124869"/>
<dbReference type="GeneID" id="100124869"/>
<dbReference type="KEGG" id="xtr:100124869"/>
<dbReference type="AGR" id="Xenbase:XB-GENE-6258935"/>
<dbReference type="CTD" id="285282"/>
<dbReference type="Xenbase" id="XB-GENE-6258935">
    <property type="gene designation" value="rabl3"/>
</dbReference>
<dbReference type="eggNOG" id="ENOG502QT3S">
    <property type="taxonomic scope" value="Eukaryota"/>
</dbReference>
<dbReference type="InParanoid" id="A4IHM6"/>
<dbReference type="OMA" id="THLICQQ"/>
<dbReference type="OrthoDB" id="5914890at2759"/>
<dbReference type="Proteomes" id="UP000008143">
    <property type="component" value="Chromosome 2"/>
</dbReference>
<dbReference type="GO" id="GO:0005525">
    <property type="term" value="F:GTP binding"/>
    <property type="evidence" value="ECO:0000250"/>
    <property type="project" value="UniProtKB"/>
</dbReference>
<dbReference type="GO" id="GO:0042803">
    <property type="term" value="F:protein homodimerization activity"/>
    <property type="evidence" value="ECO:0000250"/>
    <property type="project" value="UniProtKB"/>
</dbReference>
<dbReference type="GO" id="GO:0030183">
    <property type="term" value="P:B cell differentiation"/>
    <property type="evidence" value="ECO:0000250"/>
    <property type="project" value="UniProtKB"/>
</dbReference>
<dbReference type="GO" id="GO:0001779">
    <property type="term" value="P:natural killer cell differentiation"/>
    <property type="evidence" value="ECO:0000250"/>
    <property type="project" value="UniProtKB"/>
</dbReference>
<dbReference type="GO" id="GO:1903059">
    <property type="term" value="P:regulation of protein lipidation"/>
    <property type="evidence" value="ECO:0000250"/>
    <property type="project" value="UniProtKB"/>
</dbReference>
<dbReference type="GO" id="GO:0046578">
    <property type="term" value="P:regulation of Ras protein signal transduction"/>
    <property type="evidence" value="ECO:0000250"/>
    <property type="project" value="UniProtKB"/>
</dbReference>
<dbReference type="GO" id="GO:0033077">
    <property type="term" value="P:T cell differentiation in thymus"/>
    <property type="evidence" value="ECO:0000250"/>
    <property type="project" value="UniProtKB"/>
</dbReference>
<dbReference type="CDD" id="cd04102">
    <property type="entry name" value="RabL3"/>
    <property type="match status" value="1"/>
</dbReference>
<dbReference type="FunFam" id="3.40.50.300:FF:000525">
    <property type="entry name" value="rab-like protein 3 isoform X1"/>
    <property type="match status" value="1"/>
</dbReference>
<dbReference type="Gene3D" id="3.40.50.300">
    <property type="entry name" value="P-loop containing nucleotide triphosphate hydrolases"/>
    <property type="match status" value="1"/>
</dbReference>
<dbReference type="InterPro" id="IPR027417">
    <property type="entry name" value="P-loop_NTPase"/>
</dbReference>
<dbReference type="PANTHER" id="PTHR24073">
    <property type="entry name" value="DRAB5-RELATED"/>
    <property type="match status" value="1"/>
</dbReference>
<dbReference type="Pfam" id="PF08477">
    <property type="entry name" value="Roc"/>
    <property type="match status" value="1"/>
</dbReference>
<dbReference type="PRINTS" id="PR00449">
    <property type="entry name" value="RASTRNSFRMNG"/>
</dbReference>
<dbReference type="SMART" id="SM00175">
    <property type="entry name" value="RAB"/>
    <property type="match status" value="1"/>
</dbReference>
<dbReference type="SUPFAM" id="SSF52540">
    <property type="entry name" value="P-loop containing nucleoside triphosphate hydrolases"/>
    <property type="match status" value="1"/>
</dbReference>
<dbReference type="PROSITE" id="PS51419">
    <property type="entry name" value="RAB"/>
    <property type="match status" value="1"/>
</dbReference>